<dbReference type="EC" id="1.17.1.8" evidence="1"/>
<dbReference type="EMBL" id="CP001154">
    <property type="protein sequence ID" value="ACO74419.1"/>
    <property type="molecule type" value="Genomic_DNA"/>
</dbReference>
<dbReference type="RefSeq" id="WP_012696905.1">
    <property type="nucleotide sequence ID" value="NC_012559.1"/>
</dbReference>
<dbReference type="SMR" id="C1D7H9"/>
<dbReference type="STRING" id="557598.LHK_01429"/>
<dbReference type="GeneID" id="75109804"/>
<dbReference type="KEGG" id="lhk:LHK_01429"/>
<dbReference type="eggNOG" id="COG0289">
    <property type="taxonomic scope" value="Bacteria"/>
</dbReference>
<dbReference type="HOGENOM" id="CLU_047479_2_1_4"/>
<dbReference type="UniPathway" id="UPA00034">
    <property type="reaction ID" value="UER00018"/>
</dbReference>
<dbReference type="Proteomes" id="UP000002010">
    <property type="component" value="Chromosome"/>
</dbReference>
<dbReference type="GO" id="GO:0005829">
    <property type="term" value="C:cytosol"/>
    <property type="evidence" value="ECO:0007669"/>
    <property type="project" value="TreeGrafter"/>
</dbReference>
<dbReference type="GO" id="GO:0008839">
    <property type="term" value="F:4-hydroxy-tetrahydrodipicolinate reductase"/>
    <property type="evidence" value="ECO:0007669"/>
    <property type="project" value="UniProtKB-EC"/>
</dbReference>
<dbReference type="GO" id="GO:0051287">
    <property type="term" value="F:NAD binding"/>
    <property type="evidence" value="ECO:0007669"/>
    <property type="project" value="UniProtKB-UniRule"/>
</dbReference>
<dbReference type="GO" id="GO:0050661">
    <property type="term" value="F:NADP binding"/>
    <property type="evidence" value="ECO:0007669"/>
    <property type="project" value="UniProtKB-UniRule"/>
</dbReference>
<dbReference type="GO" id="GO:0016726">
    <property type="term" value="F:oxidoreductase activity, acting on CH or CH2 groups, NAD or NADP as acceptor"/>
    <property type="evidence" value="ECO:0007669"/>
    <property type="project" value="UniProtKB-UniRule"/>
</dbReference>
<dbReference type="GO" id="GO:0019877">
    <property type="term" value="P:diaminopimelate biosynthetic process"/>
    <property type="evidence" value="ECO:0007669"/>
    <property type="project" value="UniProtKB-UniRule"/>
</dbReference>
<dbReference type="GO" id="GO:0009089">
    <property type="term" value="P:lysine biosynthetic process via diaminopimelate"/>
    <property type="evidence" value="ECO:0007669"/>
    <property type="project" value="UniProtKB-UniRule"/>
</dbReference>
<dbReference type="CDD" id="cd02274">
    <property type="entry name" value="DHDPR_N"/>
    <property type="match status" value="1"/>
</dbReference>
<dbReference type="FunFam" id="3.30.360.10:FF:000004">
    <property type="entry name" value="4-hydroxy-tetrahydrodipicolinate reductase"/>
    <property type="match status" value="1"/>
</dbReference>
<dbReference type="FunFam" id="3.40.50.720:FF:000048">
    <property type="entry name" value="4-hydroxy-tetrahydrodipicolinate reductase"/>
    <property type="match status" value="1"/>
</dbReference>
<dbReference type="Gene3D" id="3.30.360.10">
    <property type="entry name" value="Dihydrodipicolinate Reductase, domain 2"/>
    <property type="match status" value="1"/>
</dbReference>
<dbReference type="Gene3D" id="3.40.50.720">
    <property type="entry name" value="NAD(P)-binding Rossmann-like Domain"/>
    <property type="match status" value="1"/>
</dbReference>
<dbReference type="HAMAP" id="MF_00102">
    <property type="entry name" value="DapB"/>
    <property type="match status" value="1"/>
</dbReference>
<dbReference type="InterPro" id="IPR022663">
    <property type="entry name" value="DapB_C"/>
</dbReference>
<dbReference type="InterPro" id="IPR000846">
    <property type="entry name" value="DapB_N"/>
</dbReference>
<dbReference type="InterPro" id="IPR022664">
    <property type="entry name" value="DapB_N_CS"/>
</dbReference>
<dbReference type="InterPro" id="IPR023940">
    <property type="entry name" value="DHDPR_bac"/>
</dbReference>
<dbReference type="InterPro" id="IPR036291">
    <property type="entry name" value="NAD(P)-bd_dom_sf"/>
</dbReference>
<dbReference type="NCBIfam" id="TIGR00036">
    <property type="entry name" value="dapB"/>
    <property type="match status" value="1"/>
</dbReference>
<dbReference type="PANTHER" id="PTHR20836:SF0">
    <property type="entry name" value="4-HYDROXY-TETRAHYDRODIPICOLINATE REDUCTASE 1, CHLOROPLASTIC-RELATED"/>
    <property type="match status" value="1"/>
</dbReference>
<dbReference type="PANTHER" id="PTHR20836">
    <property type="entry name" value="DIHYDRODIPICOLINATE REDUCTASE"/>
    <property type="match status" value="1"/>
</dbReference>
<dbReference type="Pfam" id="PF05173">
    <property type="entry name" value="DapB_C"/>
    <property type="match status" value="1"/>
</dbReference>
<dbReference type="Pfam" id="PF01113">
    <property type="entry name" value="DapB_N"/>
    <property type="match status" value="1"/>
</dbReference>
<dbReference type="PIRSF" id="PIRSF000161">
    <property type="entry name" value="DHPR"/>
    <property type="match status" value="1"/>
</dbReference>
<dbReference type="SUPFAM" id="SSF55347">
    <property type="entry name" value="Glyceraldehyde-3-phosphate dehydrogenase-like, C-terminal domain"/>
    <property type="match status" value="1"/>
</dbReference>
<dbReference type="SUPFAM" id="SSF51735">
    <property type="entry name" value="NAD(P)-binding Rossmann-fold domains"/>
    <property type="match status" value="1"/>
</dbReference>
<dbReference type="PROSITE" id="PS01298">
    <property type="entry name" value="DAPB"/>
    <property type="match status" value="1"/>
</dbReference>
<name>DAPB_LARHH</name>
<keyword id="KW-0028">Amino-acid biosynthesis</keyword>
<keyword id="KW-0963">Cytoplasm</keyword>
<keyword id="KW-0220">Diaminopimelate biosynthesis</keyword>
<keyword id="KW-0457">Lysine biosynthesis</keyword>
<keyword id="KW-0520">NAD</keyword>
<keyword id="KW-0521">NADP</keyword>
<keyword id="KW-0560">Oxidoreductase</keyword>
<keyword id="KW-1185">Reference proteome</keyword>
<protein>
    <recommendedName>
        <fullName evidence="1">4-hydroxy-tetrahydrodipicolinate reductase</fullName>
        <shortName evidence="1">HTPA reductase</shortName>
        <ecNumber evidence="1">1.17.1.8</ecNumber>
    </recommendedName>
</protein>
<feature type="chain" id="PRO_1000118858" description="4-hydroxy-tetrahydrodipicolinate reductase">
    <location>
        <begin position="1"/>
        <end position="267"/>
    </location>
</feature>
<feature type="active site" description="Proton donor/acceptor" evidence="1">
    <location>
        <position position="156"/>
    </location>
</feature>
<feature type="active site" description="Proton donor" evidence="1">
    <location>
        <position position="160"/>
    </location>
</feature>
<feature type="binding site" evidence="1">
    <location>
        <begin position="10"/>
        <end position="15"/>
    </location>
    <ligand>
        <name>NAD(+)</name>
        <dbReference type="ChEBI" id="CHEBI:57540"/>
    </ligand>
</feature>
<feature type="binding site" evidence="1">
    <location>
        <position position="36"/>
    </location>
    <ligand>
        <name>NAD(+)</name>
        <dbReference type="ChEBI" id="CHEBI:57540"/>
    </ligand>
</feature>
<feature type="binding site" evidence="1">
    <location>
        <position position="37"/>
    </location>
    <ligand>
        <name>NADP(+)</name>
        <dbReference type="ChEBI" id="CHEBI:58349"/>
    </ligand>
</feature>
<feature type="binding site" evidence="1">
    <location>
        <begin position="99"/>
        <end position="101"/>
    </location>
    <ligand>
        <name>NAD(+)</name>
        <dbReference type="ChEBI" id="CHEBI:57540"/>
    </ligand>
</feature>
<feature type="binding site" evidence="1">
    <location>
        <begin position="123"/>
        <end position="126"/>
    </location>
    <ligand>
        <name>NAD(+)</name>
        <dbReference type="ChEBI" id="CHEBI:57540"/>
    </ligand>
</feature>
<feature type="binding site" evidence="1">
    <location>
        <position position="157"/>
    </location>
    <ligand>
        <name>(S)-2,3,4,5-tetrahydrodipicolinate</name>
        <dbReference type="ChEBI" id="CHEBI:16845"/>
    </ligand>
</feature>
<feature type="binding site" evidence="1">
    <location>
        <begin position="166"/>
        <end position="167"/>
    </location>
    <ligand>
        <name>(S)-2,3,4,5-tetrahydrodipicolinate</name>
        <dbReference type="ChEBI" id="CHEBI:16845"/>
    </ligand>
</feature>
<accession>C1D7H9</accession>
<sequence>MSDLRLVIAGCGGRMGRALIEAVTSTPGVVLAGALERAESPLVGQDAGLPLGLTTGVRVSHDVDAALARADALIDFTRPEATLAYLAACRRHKVNMIIGTTGFDDAGKAAIRDAGQEIGIVFAPNFSVGVNLTFKLLDLAARVLNEGYDIEIIEAHHRHKVDAPSGTALRMGEVVADALGRDLKTCAVYGREGVTGERDPGTIGFATVRAGDVVGDHTVLFATPGERVEITHKASSRLTFANGAVRAARWLGKRHGQFDMQDVLGLR</sequence>
<evidence type="ECO:0000255" key="1">
    <source>
        <dbReference type="HAMAP-Rule" id="MF_00102"/>
    </source>
</evidence>
<evidence type="ECO:0000305" key="2"/>
<gene>
    <name evidence="1" type="primary">dapB</name>
    <name type="ordered locus">LHK_01429</name>
</gene>
<proteinExistence type="inferred from homology"/>
<comment type="function">
    <text evidence="1">Catalyzes the conversion of 4-hydroxy-tetrahydrodipicolinate (HTPA) to tetrahydrodipicolinate.</text>
</comment>
<comment type="catalytic activity">
    <reaction evidence="1">
        <text>(S)-2,3,4,5-tetrahydrodipicolinate + NAD(+) + H2O = (2S,4S)-4-hydroxy-2,3,4,5-tetrahydrodipicolinate + NADH + H(+)</text>
        <dbReference type="Rhea" id="RHEA:35323"/>
        <dbReference type="ChEBI" id="CHEBI:15377"/>
        <dbReference type="ChEBI" id="CHEBI:15378"/>
        <dbReference type="ChEBI" id="CHEBI:16845"/>
        <dbReference type="ChEBI" id="CHEBI:57540"/>
        <dbReference type="ChEBI" id="CHEBI:57945"/>
        <dbReference type="ChEBI" id="CHEBI:67139"/>
        <dbReference type="EC" id="1.17.1.8"/>
    </reaction>
</comment>
<comment type="catalytic activity">
    <reaction evidence="1">
        <text>(S)-2,3,4,5-tetrahydrodipicolinate + NADP(+) + H2O = (2S,4S)-4-hydroxy-2,3,4,5-tetrahydrodipicolinate + NADPH + H(+)</text>
        <dbReference type="Rhea" id="RHEA:35331"/>
        <dbReference type="ChEBI" id="CHEBI:15377"/>
        <dbReference type="ChEBI" id="CHEBI:15378"/>
        <dbReference type="ChEBI" id="CHEBI:16845"/>
        <dbReference type="ChEBI" id="CHEBI:57783"/>
        <dbReference type="ChEBI" id="CHEBI:58349"/>
        <dbReference type="ChEBI" id="CHEBI:67139"/>
        <dbReference type="EC" id="1.17.1.8"/>
    </reaction>
</comment>
<comment type="pathway">
    <text evidence="1">Amino-acid biosynthesis; L-lysine biosynthesis via DAP pathway; (S)-tetrahydrodipicolinate from L-aspartate: step 4/4.</text>
</comment>
<comment type="subcellular location">
    <subcellularLocation>
        <location evidence="1">Cytoplasm</location>
    </subcellularLocation>
</comment>
<comment type="similarity">
    <text evidence="1">Belongs to the DapB family.</text>
</comment>
<comment type="caution">
    <text evidence="2">Was originally thought to be a dihydrodipicolinate reductase (DHDPR), catalyzing the conversion of dihydrodipicolinate to tetrahydrodipicolinate. However, it was shown in E.coli that the substrate of the enzymatic reaction is not dihydrodipicolinate (DHDP) but in fact (2S,4S)-4-hydroxy-2,3,4,5-tetrahydrodipicolinic acid (HTPA), the product released by the DapA-catalyzed reaction.</text>
</comment>
<reference key="1">
    <citation type="journal article" date="2009" name="PLoS Genet.">
        <title>The complete genome and proteome of Laribacter hongkongensis reveal potential mechanisms for adaptations to different temperatures and habitats.</title>
        <authorList>
            <person name="Woo P.C.Y."/>
            <person name="Lau S.K.P."/>
            <person name="Tse H."/>
            <person name="Teng J.L.L."/>
            <person name="Curreem S.O."/>
            <person name="Tsang A.K.L."/>
            <person name="Fan R.Y.Y."/>
            <person name="Wong G.K.M."/>
            <person name="Huang Y."/>
            <person name="Loman N.J."/>
            <person name="Snyder L.A.S."/>
            <person name="Cai J.J."/>
            <person name="Huang J.-D."/>
            <person name="Mak W."/>
            <person name="Pallen M.J."/>
            <person name="Lok S."/>
            <person name="Yuen K.-Y."/>
        </authorList>
    </citation>
    <scope>NUCLEOTIDE SEQUENCE [LARGE SCALE GENOMIC DNA]</scope>
    <source>
        <strain>HLHK9</strain>
    </source>
</reference>
<organism>
    <name type="scientific">Laribacter hongkongensis (strain HLHK9)</name>
    <dbReference type="NCBI Taxonomy" id="557598"/>
    <lineage>
        <taxon>Bacteria</taxon>
        <taxon>Pseudomonadati</taxon>
        <taxon>Pseudomonadota</taxon>
        <taxon>Betaproteobacteria</taxon>
        <taxon>Neisseriales</taxon>
        <taxon>Aquaspirillaceae</taxon>
        <taxon>Laribacter</taxon>
    </lineage>
</organism>